<sequence length="122" mass="13718">MALRNAILRHLRVPVQTLGLNQSKIGFLGTIRSFSSHDDHLSREAVVDRVLDVVKSFPKVDPSKVTPEVHFQNDLGLDSLDTVEIVMAIEEEFKLEIPDKEADKIDSCSLAIEYVYNHPMSS</sequence>
<keyword id="KW-0002">3D-structure</keyword>
<keyword id="KW-0249">Electron transport</keyword>
<keyword id="KW-0275">Fatty acid biosynthesis</keyword>
<keyword id="KW-0276">Fatty acid metabolism</keyword>
<keyword id="KW-0444">Lipid biosynthesis</keyword>
<keyword id="KW-0443">Lipid metabolism</keyword>
<keyword id="KW-0496">Mitochondrion</keyword>
<keyword id="KW-0596">Phosphopantetheine</keyword>
<keyword id="KW-0597">Phosphoprotein</keyword>
<keyword id="KW-1185">Reference proteome</keyword>
<keyword id="KW-0679">Respiratory chain</keyword>
<keyword id="KW-0809">Transit peptide</keyword>
<keyword id="KW-0813">Transport</keyword>
<protein>
    <recommendedName>
        <fullName>Acyl carrier protein 1, mitochondrial</fullName>
    </recommendedName>
    <alternativeName>
        <fullName>MtACP-1</fullName>
        <shortName>ACP</shortName>
    </alternativeName>
    <alternativeName>
        <fullName>NADH-ubiquinone oxidoreductase 9.6 kDa subunit</fullName>
    </alternativeName>
</protein>
<comment type="function">
    <text evidence="1">Carrier of the growing fatty acid chain in fatty acid biosynthesis (By similarity). May be involved in the synthesis of short and medium chain fatty acids. Accessory and non-catalytic subunit of the mitochondrial membrane respiratory chain NADH dehydrogenase (Complex I), which functions in the transfer of electrons from NADH to the respiratory chain (By similarity).</text>
</comment>
<comment type="pathway">
    <text>Lipid metabolism; fatty acid biosynthesis.</text>
</comment>
<comment type="subunit">
    <text>Complex I is composed of at least 49 different subunits.</text>
</comment>
<comment type="subcellular location">
    <subcellularLocation>
        <location evidence="5">Mitochondrion</location>
    </subcellularLocation>
</comment>
<comment type="PTM">
    <text evidence="4">4'-phosphopantetheine is transferred from CoA to a specific serine of the apo-ACP-like protein.</text>
</comment>
<comment type="similarity">
    <text evidence="4">Belongs to the acyl carrier protein (ACP) family.</text>
</comment>
<accession>P53665</accession>
<proteinExistence type="evidence at protein level"/>
<evidence type="ECO:0000250" key="1"/>
<evidence type="ECO:0000255" key="2">
    <source>
        <dbReference type="PROSITE-ProRule" id="PRU00258"/>
    </source>
</evidence>
<evidence type="ECO:0000269" key="3">
    <source>
    </source>
</evidence>
<evidence type="ECO:0000305" key="4"/>
<evidence type="ECO:0000305" key="5">
    <source>
    </source>
</evidence>
<evidence type="ECO:0007829" key="6">
    <source>
        <dbReference type="PDB" id="8BEH"/>
    </source>
</evidence>
<organism>
    <name type="scientific">Arabidopsis thaliana</name>
    <name type="common">Mouse-ear cress</name>
    <dbReference type="NCBI Taxonomy" id="3702"/>
    <lineage>
        <taxon>Eukaryota</taxon>
        <taxon>Viridiplantae</taxon>
        <taxon>Streptophyta</taxon>
        <taxon>Embryophyta</taxon>
        <taxon>Tracheophyta</taxon>
        <taxon>Spermatophyta</taxon>
        <taxon>Magnoliopsida</taxon>
        <taxon>eudicotyledons</taxon>
        <taxon>Gunneridae</taxon>
        <taxon>Pentapetalae</taxon>
        <taxon>rosids</taxon>
        <taxon>malvids</taxon>
        <taxon>Brassicales</taxon>
        <taxon>Brassicaceae</taxon>
        <taxon>Camelineae</taxon>
        <taxon>Arabidopsis</taxon>
    </lineage>
</organism>
<name>ACPM1_ARATH</name>
<reference key="1">
    <citation type="journal article" date="1994" name="Plant Physiol.">
        <title>The characterization of a mitochondrial acyl carrier protein isoform isolated from Arabidopsis thaliana.</title>
        <authorList>
            <person name="Shintani D.K."/>
            <person name="Ohlrogge J.B."/>
        </authorList>
    </citation>
    <scope>NUCLEOTIDE SEQUENCE [MRNA]</scope>
    <source>
        <strain>cv. Columbia</strain>
        <tissue>Leaf</tissue>
    </source>
</reference>
<reference key="2">
    <citation type="journal article" date="1999" name="Nature">
        <title>Sequence and analysis of chromosome 2 of the plant Arabidopsis thaliana.</title>
        <authorList>
            <person name="Lin X."/>
            <person name="Kaul S."/>
            <person name="Rounsley S.D."/>
            <person name="Shea T.P."/>
            <person name="Benito M.-I."/>
            <person name="Town C.D."/>
            <person name="Fujii C.Y."/>
            <person name="Mason T.M."/>
            <person name="Bowman C.L."/>
            <person name="Barnstead M.E."/>
            <person name="Feldblyum T.V."/>
            <person name="Buell C.R."/>
            <person name="Ketchum K.A."/>
            <person name="Lee J.J."/>
            <person name="Ronning C.M."/>
            <person name="Koo H.L."/>
            <person name="Moffat K.S."/>
            <person name="Cronin L.A."/>
            <person name="Shen M."/>
            <person name="Pai G."/>
            <person name="Van Aken S."/>
            <person name="Umayam L."/>
            <person name="Tallon L.J."/>
            <person name="Gill J.E."/>
            <person name="Adams M.D."/>
            <person name="Carrera A.J."/>
            <person name="Creasy T.H."/>
            <person name="Goodman H.M."/>
            <person name="Somerville C.R."/>
            <person name="Copenhaver G.P."/>
            <person name="Preuss D."/>
            <person name="Nierman W.C."/>
            <person name="White O."/>
            <person name="Eisen J.A."/>
            <person name="Salzberg S.L."/>
            <person name="Fraser C.M."/>
            <person name="Venter J.C."/>
        </authorList>
    </citation>
    <scope>NUCLEOTIDE SEQUENCE [LARGE SCALE GENOMIC DNA]</scope>
    <source>
        <strain>cv. Columbia</strain>
    </source>
</reference>
<reference key="3">
    <citation type="journal article" date="2017" name="Plant J.">
        <title>Araport11: a complete reannotation of the Arabidopsis thaliana reference genome.</title>
        <authorList>
            <person name="Cheng C.Y."/>
            <person name="Krishnakumar V."/>
            <person name="Chan A.P."/>
            <person name="Thibaud-Nissen F."/>
            <person name="Schobel S."/>
            <person name="Town C.D."/>
        </authorList>
    </citation>
    <scope>GENOME REANNOTATION</scope>
    <source>
        <strain>cv. Columbia</strain>
    </source>
</reference>
<reference key="4">
    <citation type="journal article" date="2015" name="J. Exp. Bot.">
        <title>Identification of cleavage sites and substrate proteins for two mitochondrial intermediate peptidases in Arabidopsis thaliana.</title>
        <authorList>
            <person name="Carrie C."/>
            <person name="Venne A.S."/>
            <person name="Zahedi R.P."/>
            <person name="Soll J."/>
        </authorList>
    </citation>
    <scope>IDENTIFICATION BY MASS SPECTROMETRY</scope>
    <scope>CLEAVAGE OF TRANSIT PEPTIDE AFTER PHE-34</scope>
</reference>
<feature type="transit peptide" description="Mitochondrion" evidence="3">
    <location>
        <begin position="1"/>
        <end position="34"/>
    </location>
</feature>
<feature type="chain" id="PRO_0000000567" description="Acyl carrier protein 1, mitochondrial">
    <location>
        <begin position="35"/>
        <end position="122"/>
    </location>
</feature>
<feature type="domain" description="Carrier" evidence="2">
    <location>
        <begin position="44"/>
        <end position="119"/>
    </location>
</feature>
<feature type="modified residue" description="O-(pantetheine 4'-phosphoryl)serine" evidence="2">
    <location>
        <position position="79"/>
    </location>
</feature>
<feature type="helix" evidence="6">
    <location>
        <begin position="43"/>
        <end position="55"/>
    </location>
</feature>
<feature type="strand" evidence="6">
    <location>
        <begin position="58"/>
        <end position="60"/>
    </location>
</feature>
<feature type="turn" evidence="6">
    <location>
        <begin position="71"/>
        <end position="74"/>
    </location>
</feature>
<feature type="helix" evidence="6">
    <location>
        <begin position="79"/>
        <end position="93"/>
    </location>
</feature>
<feature type="helix" evidence="6">
    <location>
        <begin position="99"/>
        <end position="104"/>
    </location>
</feature>
<feature type="helix" evidence="6">
    <location>
        <begin position="108"/>
        <end position="117"/>
    </location>
</feature>
<gene>
    <name type="primary">MTACP1</name>
    <name type="ordered locus">At2g44620</name>
    <name type="ORF">F16B22.11</name>
</gene>
<dbReference type="EMBL" id="L23574">
    <property type="protein sequence ID" value="AAB96840.1"/>
    <property type="molecule type" value="mRNA"/>
</dbReference>
<dbReference type="EMBL" id="AC003672">
    <property type="protein sequence ID" value="AAC27464.1"/>
    <property type="molecule type" value="Genomic_DNA"/>
</dbReference>
<dbReference type="EMBL" id="CP002685">
    <property type="protein sequence ID" value="AEC10448.1"/>
    <property type="molecule type" value="Genomic_DNA"/>
</dbReference>
<dbReference type="PIR" id="T01589">
    <property type="entry name" value="T01589"/>
</dbReference>
<dbReference type="RefSeq" id="NP_181990.1">
    <property type="nucleotide sequence ID" value="NM_130026.4"/>
</dbReference>
<dbReference type="PDB" id="7A23">
    <property type="method" value="EM"/>
    <property type="resolution" value="3.70 A"/>
    <property type="chains" value="k=1-122"/>
</dbReference>
<dbReference type="PDB" id="7A24">
    <property type="method" value="EM"/>
    <property type="resolution" value="3.80 A"/>
    <property type="chains" value="k=1-122"/>
</dbReference>
<dbReference type="PDB" id="7AQW">
    <property type="method" value="EM"/>
    <property type="resolution" value="3.17 A"/>
    <property type="chains" value="T=1-122"/>
</dbReference>
<dbReference type="PDB" id="7AR7">
    <property type="method" value="EM"/>
    <property type="resolution" value="3.72 A"/>
    <property type="chains" value="T=38-121"/>
</dbReference>
<dbReference type="PDB" id="7AR8">
    <property type="method" value="EM"/>
    <property type="resolution" value="3.53 A"/>
    <property type="chains" value="T=1-122"/>
</dbReference>
<dbReference type="PDB" id="7ARB">
    <property type="method" value="EM"/>
    <property type="resolution" value="3.41 A"/>
    <property type="chains" value="T=1-122"/>
</dbReference>
<dbReference type="PDB" id="8BEH">
    <property type="method" value="EM"/>
    <property type="resolution" value="2.29 A"/>
    <property type="chains" value="T=1-122"/>
</dbReference>
<dbReference type="PDB" id="8BPX">
    <property type="method" value="EM"/>
    <property type="resolution" value="2.09 A"/>
    <property type="chains" value="T=1-122"/>
</dbReference>
<dbReference type="PDB" id="8BQ5">
    <property type="method" value="EM"/>
    <property type="resolution" value="2.73 A"/>
    <property type="chains" value="T=1-122"/>
</dbReference>
<dbReference type="PDB" id="8BQ6">
    <property type="method" value="EM"/>
    <property type="resolution" value="2.80 A"/>
    <property type="chains" value="T=1-122"/>
</dbReference>
<dbReference type="PDBsum" id="7A23"/>
<dbReference type="PDBsum" id="7A24"/>
<dbReference type="PDBsum" id="7AQW"/>
<dbReference type="PDBsum" id="7AR7"/>
<dbReference type="PDBsum" id="7AR8"/>
<dbReference type="PDBsum" id="7ARB"/>
<dbReference type="PDBsum" id="8BEH"/>
<dbReference type="PDBsum" id="8BPX"/>
<dbReference type="PDBsum" id="8BQ5"/>
<dbReference type="PDBsum" id="8BQ6"/>
<dbReference type="EMDB" id="EMD-11874"/>
<dbReference type="EMDB" id="EMD-11875"/>
<dbReference type="EMDB" id="EMD-11876"/>
<dbReference type="EMDB" id="EMD-11878"/>
<dbReference type="EMDB" id="EMD-16003"/>
<dbReference type="EMDB" id="EMD-16168"/>
<dbReference type="EMDB" id="EMD-16171"/>
<dbReference type="EMDB" id="EMD-16172"/>
<dbReference type="SMR" id="P53665"/>
<dbReference type="BioGRID" id="4406">
    <property type="interactions" value="1"/>
</dbReference>
<dbReference type="FunCoup" id="P53665">
    <property type="interactions" value="2303"/>
</dbReference>
<dbReference type="STRING" id="3702.P53665"/>
<dbReference type="PaxDb" id="3702-AT2G44620.1"/>
<dbReference type="ProteomicsDB" id="244740"/>
<dbReference type="EnsemblPlants" id="AT2G44620.1">
    <property type="protein sequence ID" value="AT2G44620.1"/>
    <property type="gene ID" value="AT2G44620"/>
</dbReference>
<dbReference type="GeneID" id="819070"/>
<dbReference type="Gramene" id="AT2G44620.1">
    <property type="protein sequence ID" value="AT2G44620.1"/>
    <property type="gene ID" value="AT2G44620"/>
</dbReference>
<dbReference type="KEGG" id="ath:AT2G44620"/>
<dbReference type="Araport" id="AT2G44620"/>
<dbReference type="TAIR" id="AT2G44620">
    <property type="gene designation" value="MTACP1"/>
</dbReference>
<dbReference type="eggNOG" id="KOG1748">
    <property type="taxonomic scope" value="Eukaryota"/>
</dbReference>
<dbReference type="HOGENOM" id="CLU_108696_0_3_1"/>
<dbReference type="InParanoid" id="P53665"/>
<dbReference type="OMA" id="HIRIPAT"/>
<dbReference type="OrthoDB" id="448946at2759"/>
<dbReference type="PhylomeDB" id="P53665"/>
<dbReference type="UniPathway" id="UPA00094"/>
<dbReference type="PRO" id="PR:P53665"/>
<dbReference type="Proteomes" id="UP000006548">
    <property type="component" value="Chromosome 2"/>
</dbReference>
<dbReference type="ExpressionAtlas" id="P53665">
    <property type="expression patterns" value="baseline and differential"/>
</dbReference>
<dbReference type="GO" id="GO:0005829">
    <property type="term" value="C:cytosol"/>
    <property type="evidence" value="ECO:0007005"/>
    <property type="project" value="TAIR"/>
</dbReference>
<dbReference type="GO" id="GO:0005759">
    <property type="term" value="C:mitochondrial matrix"/>
    <property type="evidence" value="ECO:0000314"/>
    <property type="project" value="TAIR"/>
</dbReference>
<dbReference type="GO" id="GO:0005739">
    <property type="term" value="C:mitochondrion"/>
    <property type="evidence" value="ECO:0000314"/>
    <property type="project" value="TAIR"/>
</dbReference>
<dbReference type="GO" id="GO:0000036">
    <property type="term" value="F:acyl carrier activity"/>
    <property type="evidence" value="ECO:0000315"/>
    <property type="project" value="TAIR"/>
</dbReference>
<dbReference type="GO" id="GO:0006633">
    <property type="term" value="P:fatty acid biosynthetic process"/>
    <property type="evidence" value="ECO:0000314"/>
    <property type="project" value="TAIR"/>
</dbReference>
<dbReference type="GO" id="GO:0006120">
    <property type="term" value="P:mitochondrial electron transport, NADH to ubiquinone"/>
    <property type="evidence" value="ECO:0000314"/>
    <property type="project" value="TAIR"/>
</dbReference>
<dbReference type="GO" id="GO:1902600">
    <property type="term" value="P:proton transmembrane transport"/>
    <property type="evidence" value="ECO:0007669"/>
    <property type="project" value="GOC"/>
</dbReference>
<dbReference type="FunFam" id="1.10.1200.10:FF:000003">
    <property type="entry name" value="Acyl carrier protein"/>
    <property type="match status" value="1"/>
</dbReference>
<dbReference type="Gene3D" id="1.10.1200.10">
    <property type="entry name" value="ACP-like"/>
    <property type="match status" value="1"/>
</dbReference>
<dbReference type="HAMAP" id="MF_01217">
    <property type="entry name" value="Acyl_carrier"/>
    <property type="match status" value="1"/>
</dbReference>
<dbReference type="InterPro" id="IPR003231">
    <property type="entry name" value="ACP"/>
</dbReference>
<dbReference type="InterPro" id="IPR036736">
    <property type="entry name" value="ACP-like_sf"/>
</dbReference>
<dbReference type="InterPro" id="IPR009081">
    <property type="entry name" value="PP-bd_ACP"/>
</dbReference>
<dbReference type="InterPro" id="IPR006162">
    <property type="entry name" value="Ppantetheine_attach_site"/>
</dbReference>
<dbReference type="NCBIfam" id="TIGR00517">
    <property type="entry name" value="acyl_carrier"/>
    <property type="match status" value="1"/>
</dbReference>
<dbReference type="NCBIfam" id="NF002148">
    <property type="entry name" value="PRK00982.1-2"/>
    <property type="match status" value="1"/>
</dbReference>
<dbReference type="PANTHER" id="PTHR20863">
    <property type="entry name" value="ACYL CARRIER PROTEIN"/>
    <property type="match status" value="1"/>
</dbReference>
<dbReference type="PANTHER" id="PTHR20863:SF28">
    <property type="entry name" value="ACYL CARRIER PROTEIN, MITOCHONDRIAL"/>
    <property type="match status" value="1"/>
</dbReference>
<dbReference type="Pfam" id="PF00550">
    <property type="entry name" value="PP-binding"/>
    <property type="match status" value="1"/>
</dbReference>
<dbReference type="SUPFAM" id="SSF47336">
    <property type="entry name" value="ACP-like"/>
    <property type="match status" value="1"/>
</dbReference>
<dbReference type="PROSITE" id="PS50075">
    <property type="entry name" value="CARRIER"/>
    <property type="match status" value="1"/>
</dbReference>
<dbReference type="PROSITE" id="PS00012">
    <property type="entry name" value="PHOSPHOPANTETHEINE"/>
    <property type="match status" value="1"/>
</dbReference>